<comment type="function">
    <text evidence="1">Component of the proteasome core, a large protease complex with broad specificity involved in protein degradation.</text>
</comment>
<comment type="catalytic activity">
    <reaction evidence="1">
        <text>Cleavage of peptide bonds with very broad specificity.</text>
        <dbReference type="EC" id="3.4.25.1"/>
    </reaction>
</comment>
<comment type="activity regulation">
    <text evidence="1">The formation of the proteasomal ATPase PAN-20S proteasome complex, via the docking of the C-termini of PAN into the intersubunit pockets in the alpha-rings, triggers opening of the gate for substrate entry. Interconversion between the open-gate and close-gate conformations leads to a dynamic regulation of the 20S proteasome proteolysis activity.</text>
</comment>
<comment type="subunit">
    <text evidence="1">The 20S proteasome core is composed of 14 alpha and 14 beta subunits that assemble into four stacked heptameric rings, resulting in a barrel-shaped structure. The two inner rings, each composed of seven catalytic beta subunits, are sandwiched by two outer rings, each composed of seven alpha subunits. The catalytic chamber with the active sites is on the inside of the barrel. Has a gated structure, the ends of the cylinder being occluded by the N-termini of the alpha-subunits. Is capped at one or both ends by the proteasome regulatory ATPase, PAN.</text>
</comment>
<comment type="subcellular location">
    <subcellularLocation>
        <location evidence="1">Cytoplasm</location>
    </subcellularLocation>
</comment>
<comment type="similarity">
    <text evidence="1">Belongs to the peptidase T1B family.</text>
</comment>
<accession>O27270</accession>
<sequence length="210" mass="22765">MNDKNTLKGTTTVGITCKDGVVFATERRASMGNLIAHKATDKIFKIDEHIAATIAGSVADAQSLMKYLKAEAALYRMRNSEKISIEAAAALAANILHSSRFYPFIVQTLLGGVDENGAKIYSLDPSGGMIPDKFVSTGSGSPVAYGVLEDRYSDELYVDEAVDVAIRAIKSAMERDTYSGNGILVATVTEEEGFRMLSEEEIQKRIENLN</sequence>
<dbReference type="EC" id="3.4.25.1" evidence="1"/>
<dbReference type="EMBL" id="AE000666">
    <property type="protein sequence ID" value="AAB85691.1"/>
    <property type="molecule type" value="Genomic_DNA"/>
</dbReference>
<dbReference type="PIR" id="E69027">
    <property type="entry name" value="E69027"/>
</dbReference>
<dbReference type="RefSeq" id="WP_010876826.1">
    <property type="nucleotide sequence ID" value="NC_000916.1"/>
</dbReference>
<dbReference type="SMR" id="O27270"/>
<dbReference type="FunCoup" id="O27270">
    <property type="interactions" value="129"/>
</dbReference>
<dbReference type="IntAct" id="O27270">
    <property type="interactions" value="1"/>
</dbReference>
<dbReference type="STRING" id="187420.MTH_1202"/>
<dbReference type="MEROPS" id="T01.002"/>
<dbReference type="PaxDb" id="187420-MTH_1202"/>
<dbReference type="EnsemblBacteria" id="AAB85691">
    <property type="protein sequence ID" value="AAB85691"/>
    <property type="gene ID" value="MTH_1202"/>
</dbReference>
<dbReference type="GeneID" id="1471610"/>
<dbReference type="GeneID" id="77401730"/>
<dbReference type="KEGG" id="mth:MTH_1202"/>
<dbReference type="PATRIC" id="fig|187420.15.peg.1180"/>
<dbReference type="HOGENOM" id="CLU_035750_7_2_2"/>
<dbReference type="InParanoid" id="O27270"/>
<dbReference type="Proteomes" id="UP000005223">
    <property type="component" value="Chromosome"/>
</dbReference>
<dbReference type="GO" id="GO:0005737">
    <property type="term" value="C:cytoplasm"/>
    <property type="evidence" value="ECO:0007669"/>
    <property type="project" value="UniProtKB-SubCell"/>
</dbReference>
<dbReference type="GO" id="GO:0019774">
    <property type="term" value="C:proteasome core complex, beta-subunit complex"/>
    <property type="evidence" value="ECO:0000250"/>
    <property type="project" value="UniProtKB"/>
</dbReference>
<dbReference type="GO" id="GO:0004298">
    <property type="term" value="F:threonine-type endopeptidase activity"/>
    <property type="evidence" value="ECO:0007669"/>
    <property type="project" value="UniProtKB-UniRule"/>
</dbReference>
<dbReference type="GO" id="GO:0010498">
    <property type="term" value="P:proteasomal protein catabolic process"/>
    <property type="evidence" value="ECO:0007669"/>
    <property type="project" value="UniProtKB-UniRule"/>
</dbReference>
<dbReference type="CDD" id="cd03764">
    <property type="entry name" value="proteasome_beta_archeal"/>
    <property type="match status" value="1"/>
</dbReference>
<dbReference type="FunFam" id="3.60.20.10:FF:000049">
    <property type="entry name" value="Proteasome subunit beta"/>
    <property type="match status" value="1"/>
</dbReference>
<dbReference type="Gene3D" id="3.60.20.10">
    <property type="entry name" value="Glutamine Phosphoribosylpyrophosphate, subunit 1, domain 1"/>
    <property type="match status" value="1"/>
</dbReference>
<dbReference type="HAMAP" id="MF_02113_A">
    <property type="entry name" value="Proteasome_B_A"/>
    <property type="match status" value="1"/>
</dbReference>
<dbReference type="InterPro" id="IPR029055">
    <property type="entry name" value="Ntn_hydrolases_N"/>
</dbReference>
<dbReference type="InterPro" id="IPR019983">
    <property type="entry name" value="Pept_T1A_Psome_bsu_arc"/>
</dbReference>
<dbReference type="InterPro" id="IPR000243">
    <property type="entry name" value="Pept_T1A_subB"/>
</dbReference>
<dbReference type="InterPro" id="IPR016050">
    <property type="entry name" value="Proteasome_bsu_CS"/>
</dbReference>
<dbReference type="InterPro" id="IPR001353">
    <property type="entry name" value="Proteasome_sua/b"/>
</dbReference>
<dbReference type="InterPro" id="IPR023333">
    <property type="entry name" value="Proteasome_suB-type"/>
</dbReference>
<dbReference type="NCBIfam" id="TIGR03634">
    <property type="entry name" value="arc_protsome_B"/>
    <property type="match status" value="1"/>
</dbReference>
<dbReference type="PANTHER" id="PTHR32194:SF0">
    <property type="entry name" value="ATP-DEPENDENT PROTEASE SUBUNIT HSLV"/>
    <property type="match status" value="1"/>
</dbReference>
<dbReference type="PANTHER" id="PTHR32194">
    <property type="entry name" value="METALLOPROTEASE TLDD"/>
    <property type="match status" value="1"/>
</dbReference>
<dbReference type="Pfam" id="PF00227">
    <property type="entry name" value="Proteasome"/>
    <property type="match status" value="1"/>
</dbReference>
<dbReference type="PRINTS" id="PR00141">
    <property type="entry name" value="PROTEASOME"/>
</dbReference>
<dbReference type="SUPFAM" id="SSF56235">
    <property type="entry name" value="N-terminal nucleophile aminohydrolases (Ntn hydrolases)"/>
    <property type="match status" value="1"/>
</dbReference>
<dbReference type="PROSITE" id="PS00854">
    <property type="entry name" value="PROTEASOME_BETA_1"/>
    <property type="match status" value="1"/>
</dbReference>
<dbReference type="PROSITE" id="PS51476">
    <property type="entry name" value="PROTEASOME_BETA_2"/>
    <property type="match status" value="1"/>
</dbReference>
<gene>
    <name evidence="1" type="primary">psmB</name>
    <name type="ordered locus">MTH_1202</name>
</gene>
<feature type="propeptide" id="PRO_0000026665" description="Removed in mature form; by autocatalysis" evidence="1">
    <location>
        <begin position="1"/>
        <end position="9"/>
    </location>
</feature>
<feature type="chain" id="PRO_0000026666" description="Proteasome subunit beta">
    <location>
        <begin position="10"/>
        <end position="210"/>
    </location>
</feature>
<feature type="active site" description="Nucleophile" evidence="1">
    <location>
        <position position="10"/>
    </location>
</feature>
<organism>
    <name type="scientific">Methanothermobacter thermautotrophicus (strain ATCC 29096 / DSM 1053 / JCM 10044 / NBRC 100330 / Delta H)</name>
    <name type="common">Methanobacterium thermoautotrophicum</name>
    <dbReference type="NCBI Taxonomy" id="187420"/>
    <lineage>
        <taxon>Archaea</taxon>
        <taxon>Methanobacteriati</taxon>
        <taxon>Methanobacteriota</taxon>
        <taxon>Methanomada group</taxon>
        <taxon>Methanobacteria</taxon>
        <taxon>Methanobacteriales</taxon>
        <taxon>Methanobacteriaceae</taxon>
        <taxon>Methanothermobacter</taxon>
    </lineage>
</organism>
<protein>
    <recommendedName>
        <fullName evidence="1">Proteasome subunit beta</fullName>
        <ecNumber evidence="1">3.4.25.1</ecNumber>
    </recommendedName>
    <alternativeName>
        <fullName evidence="1">20S proteasome beta subunit</fullName>
    </alternativeName>
    <alternativeName>
        <fullName evidence="1">Proteasome core protein PsmB</fullName>
    </alternativeName>
</protein>
<reference key="1">
    <citation type="journal article" date="1997" name="J. Bacteriol.">
        <title>Complete genome sequence of Methanobacterium thermoautotrophicum deltaH: functional analysis and comparative genomics.</title>
        <authorList>
            <person name="Smith D.R."/>
            <person name="Doucette-Stamm L.A."/>
            <person name="Deloughery C."/>
            <person name="Lee H.-M."/>
            <person name="Dubois J."/>
            <person name="Aldredge T."/>
            <person name="Bashirzadeh R."/>
            <person name="Blakely D."/>
            <person name="Cook R."/>
            <person name="Gilbert K."/>
            <person name="Harrison D."/>
            <person name="Hoang L."/>
            <person name="Keagle P."/>
            <person name="Lumm W."/>
            <person name="Pothier B."/>
            <person name="Qiu D."/>
            <person name="Spadafora R."/>
            <person name="Vicare R."/>
            <person name="Wang Y."/>
            <person name="Wierzbowski J."/>
            <person name="Gibson R."/>
            <person name="Jiwani N."/>
            <person name="Caruso A."/>
            <person name="Bush D."/>
            <person name="Safer H."/>
            <person name="Patwell D."/>
            <person name="Prabhakar S."/>
            <person name="McDougall S."/>
            <person name="Shimer G."/>
            <person name="Goyal A."/>
            <person name="Pietrovski S."/>
            <person name="Church G.M."/>
            <person name="Daniels C.J."/>
            <person name="Mao J.-I."/>
            <person name="Rice P."/>
            <person name="Noelling J."/>
            <person name="Reeve J.N."/>
        </authorList>
    </citation>
    <scope>NUCLEOTIDE SEQUENCE [LARGE SCALE GENOMIC DNA]</scope>
    <source>
        <strain>ATCC 29096 / DSM 1053 / JCM 10044 / NBRC 100330 / Delta H</strain>
    </source>
</reference>
<name>PSB_METTH</name>
<evidence type="ECO:0000255" key="1">
    <source>
        <dbReference type="HAMAP-Rule" id="MF_02113"/>
    </source>
</evidence>
<keyword id="KW-0068">Autocatalytic cleavage</keyword>
<keyword id="KW-0963">Cytoplasm</keyword>
<keyword id="KW-0378">Hydrolase</keyword>
<keyword id="KW-0645">Protease</keyword>
<keyword id="KW-0647">Proteasome</keyword>
<keyword id="KW-1185">Reference proteome</keyword>
<keyword id="KW-0888">Threonine protease</keyword>
<keyword id="KW-0865">Zymogen</keyword>
<proteinExistence type="inferred from homology"/>